<keyword id="KW-0067">ATP-binding</keyword>
<keyword id="KW-0460">Magnesium</keyword>
<keyword id="KW-0547">Nucleotide-binding</keyword>
<keyword id="KW-0808">Transferase</keyword>
<keyword id="KW-0819">tRNA processing</keyword>
<organism>
    <name type="scientific">Bartonella henselae (strain ATCC 49882 / DSM 28221 / CCUG 30454 / Houston 1)</name>
    <name type="common">Rochalimaea henselae</name>
    <dbReference type="NCBI Taxonomy" id="283166"/>
    <lineage>
        <taxon>Bacteria</taxon>
        <taxon>Pseudomonadati</taxon>
        <taxon>Pseudomonadota</taxon>
        <taxon>Alphaproteobacteria</taxon>
        <taxon>Hyphomicrobiales</taxon>
        <taxon>Bartonellaceae</taxon>
        <taxon>Bartonella</taxon>
    </lineage>
</organism>
<feature type="chain" id="PRO_0000163878" description="tRNA dimethylallyltransferase">
    <location>
        <begin position="1"/>
        <end position="290"/>
    </location>
</feature>
<feature type="region of interest" description="Interaction with substrate tRNA" evidence="1">
    <location>
        <begin position="36"/>
        <end position="39"/>
    </location>
</feature>
<feature type="region of interest" description="Interaction with substrate tRNA" evidence="1">
    <location>
        <begin position="158"/>
        <end position="162"/>
    </location>
</feature>
<feature type="binding site" evidence="1">
    <location>
        <begin position="11"/>
        <end position="18"/>
    </location>
    <ligand>
        <name>ATP</name>
        <dbReference type="ChEBI" id="CHEBI:30616"/>
    </ligand>
</feature>
<feature type="binding site" evidence="1">
    <location>
        <begin position="13"/>
        <end position="18"/>
    </location>
    <ligand>
        <name>substrate</name>
    </ligand>
</feature>
<feature type="site" description="Interaction with substrate tRNA" evidence="1">
    <location>
        <position position="100"/>
    </location>
</feature>
<feature type="site" description="Interaction with substrate tRNA" evidence="1">
    <location>
        <position position="122"/>
    </location>
</feature>
<evidence type="ECO:0000255" key="1">
    <source>
        <dbReference type="HAMAP-Rule" id="MF_00185"/>
    </source>
</evidence>
<proteinExistence type="inferred from homology"/>
<comment type="function">
    <text evidence="1">Catalyzes the transfer of a dimethylallyl group onto the adenine at position 37 in tRNAs that read codons beginning with uridine, leading to the formation of N6-(dimethylallyl)adenosine (i(6)A).</text>
</comment>
<comment type="catalytic activity">
    <reaction evidence="1">
        <text>adenosine(37) in tRNA + dimethylallyl diphosphate = N(6)-dimethylallyladenosine(37) in tRNA + diphosphate</text>
        <dbReference type="Rhea" id="RHEA:26482"/>
        <dbReference type="Rhea" id="RHEA-COMP:10162"/>
        <dbReference type="Rhea" id="RHEA-COMP:10375"/>
        <dbReference type="ChEBI" id="CHEBI:33019"/>
        <dbReference type="ChEBI" id="CHEBI:57623"/>
        <dbReference type="ChEBI" id="CHEBI:74411"/>
        <dbReference type="ChEBI" id="CHEBI:74415"/>
        <dbReference type="EC" id="2.5.1.75"/>
    </reaction>
</comment>
<comment type="cofactor">
    <cofactor evidence="1">
        <name>Mg(2+)</name>
        <dbReference type="ChEBI" id="CHEBI:18420"/>
    </cofactor>
</comment>
<comment type="subunit">
    <text evidence="1">Monomer.</text>
</comment>
<comment type="similarity">
    <text evidence="1">Belongs to the IPP transferase family.</text>
</comment>
<accession>Q6G2T3</accession>
<protein>
    <recommendedName>
        <fullName evidence="1">tRNA dimethylallyltransferase</fullName>
        <ecNumber evidence="1">2.5.1.75</ecNumber>
    </recommendedName>
    <alternativeName>
        <fullName evidence="1">Dimethylallyl diphosphate:tRNA dimethylallyltransferase</fullName>
        <shortName evidence="1">DMAPP:tRNA dimethylallyltransferase</shortName>
        <shortName evidence="1">DMATase</shortName>
    </alternativeName>
    <alternativeName>
        <fullName evidence="1">Isopentenyl-diphosphate:tRNA isopentenyltransferase</fullName>
        <shortName evidence="1">IPP transferase</shortName>
        <shortName evidence="1">IPPT</shortName>
        <shortName evidence="1">IPTase</shortName>
    </alternativeName>
</protein>
<name>MIAA_BARHE</name>
<gene>
    <name evidence="1" type="primary">miaA</name>
    <name type="ordered locus">BH10930</name>
</gene>
<reference key="1">
    <citation type="journal article" date="2004" name="Proc. Natl. Acad. Sci. U.S.A.">
        <title>The louse-borne human pathogen Bartonella quintana is a genomic derivative of the zoonotic agent Bartonella henselae.</title>
        <authorList>
            <person name="Alsmark U.C.M."/>
            <person name="Frank A.C."/>
            <person name="Karlberg E.O."/>
            <person name="Legault B.-A."/>
            <person name="Ardell D.H."/>
            <person name="Canbaeck B."/>
            <person name="Eriksson A.-S."/>
            <person name="Naeslund A.K."/>
            <person name="Handley S.A."/>
            <person name="Huvet M."/>
            <person name="La Scola B."/>
            <person name="Holmberg M."/>
            <person name="Andersson S.G.E."/>
        </authorList>
    </citation>
    <scope>NUCLEOTIDE SEQUENCE [LARGE SCALE GENOMIC DNA]</scope>
    <source>
        <strain>ATCC 49882 / DSM 28221 / CCUG 30454 / Houston 1</strain>
    </source>
</reference>
<dbReference type="EC" id="2.5.1.75" evidence="1"/>
<dbReference type="EMBL" id="BX897699">
    <property type="protein sequence ID" value="CAF27879.1"/>
    <property type="molecule type" value="Genomic_DNA"/>
</dbReference>
<dbReference type="RefSeq" id="WP_011180944.1">
    <property type="nucleotide sequence ID" value="NZ_LRIJ02000001.1"/>
</dbReference>
<dbReference type="SMR" id="Q6G2T3"/>
<dbReference type="PaxDb" id="283166-BH10930"/>
<dbReference type="EnsemblBacteria" id="CAF27879">
    <property type="protein sequence ID" value="CAF27879"/>
    <property type="gene ID" value="BH10930"/>
</dbReference>
<dbReference type="GeneID" id="92985709"/>
<dbReference type="KEGG" id="bhe:BH10930"/>
<dbReference type="eggNOG" id="COG0324">
    <property type="taxonomic scope" value="Bacteria"/>
</dbReference>
<dbReference type="OrthoDB" id="9776390at2"/>
<dbReference type="Proteomes" id="UP000000421">
    <property type="component" value="Chromosome"/>
</dbReference>
<dbReference type="GO" id="GO:0005524">
    <property type="term" value="F:ATP binding"/>
    <property type="evidence" value="ECO:0007669"/>
    <property type="project" value="UniProtKB-UniRule"/>
</dbReference>
<dbReference type="GO" id="GO:0052381">
    <property type="term" value="F:tRNA dimethylallyltransferase activity"/>
    <property type="evidence" value="ECO:0007669"/>
    <property type="project" value="UniProtKB-UniRule"/>
</dbReference>
<dbReference type="GO" id="GO:0006400">
    <property type="term" value="P:tRNA modification"/>
    <property type="evidence" value="ECO:0007669"/>
    <property type="project" value="TreeGrafter"/>
</dbReference>
<dbReference type="Gene3D" id="1.10.20.140">
    <property type="match status" value="1"/>
</dbReference>
<dbReference type="Gene3D" id="3.40.50.300">
    <property type="entry name" value="P-loop containing nucleotide triphosphate hydrolases"/>
    <property type="match status" value="1"/>
</dbReference>
<dbReference type="HAMAP" id="MF_00185">
    <property type="entry name" value="IPP_trans"/>
    <property type="match status" value="1"/>
</dbReference>
<dbReference type="InterPro" id="IPR039657">
    <property type="entry name" value="Dimethylallyltransferase"/>
</dbReference>
<dbReference type="InterPro" id="IPR018022">
    <property type="entry name" value="IPT"/>
</dbReference>
<dbReference type="InterPro" id="IPR027417">
    <property type="entry name" value="P-loop_NTPase"/>
</dbReference>
<dbReference type="NCBIfam" id="TIGR00174">
    <property type="entry name" value="miaA"/>
    <property type="match status" value="1"/>
</dbReference>
<dbReference type="PANTHER" id="PTHR11088">
    <property type="entry name" value="TRNA DIMETHYLALLYLTRANSFERASE"/>
    <property type="match status" value="1"/>
</dbReference>
<dbReference type="PANTHER" id="PTHR11088:SF60">
    <property type="entry name" value="TRNA DIMETHYLALLYLTRANSFERASE"/>
    <property type="match status" value="1"/>
</dbReference>
<dbReference type="Pfam" id="PF01715">
    <property type="entry name" value="IPPT"/>
    <property type="match status" value="1"/>
</dbReference>
<dbReference type="SUPFAM" id="SSF52540">
    <property type="entry name" value="P-loop containing nucleoside triphosphate hydrolases"/>
    <property type="match status" value="2"/>
</dbReference>
<sequence>MKGRTITLIAGPTASGKSALALQIAQEKNALIINTDSMQVYDVLNILTARPTRTDTATVPHYLYGYVNPALHYSVGQWLCDVSKLLMTFTSKSLIFVGGTGLYFRALLEGISKIPDIPDVVRQKWRLRLDKEGAENLYRQLWQVDAVLAEKISSQDGQRIVRALEVYDATDKKLSWWQKKKTTPLIARNCSEKLLLIPPRQLLYERIHKRLDSMIEKGALEEVIAMKKLALSPLLPAMKAIGIPEFIAYLDGKQSFEEALEMVKTQTRRYAKRQITWFRNQFDEEWMLLS</sequence>